<reference key="1">
    <citation type="journal article" date="2007" name="PLoS Genet.">
        <title>A tale of two oxidation states: bacterial colonization of arsenic-rich environments.</title>
        <authorList>
            <person name="Muller D."/>
            <person name="Medigue C."/>
            <person name="Koechler S."/>
            <person name="Barbe V."/>
            <person name="Barakat M."/>
            <person name="Talla E."/>
            <person name="Bonnefoy V."/>
            <person name="Krin E."/>
            <person name="Arsene-Ploetze F."/>
            <person name="Carapito C."/>
            <person name="Chandler M."/>
            <person name="Cournoyer B."/>
            <person name="Cruveiller S."/>
            <person name="Dossat C."/>
            <person name="Duval S."/>
            <person name="Heymann M."/>
            <person name="Leize E."/>
            <person name="Lieutaud A."/>
            <person name="Lievremont D."/>
            <person name="Makita Y."/>
            <person name="Mangenot S."/>
            <person name="Nitschke W."/>
            <person name="Ortet P."/>
            <person name="Perdrial N."/>
            <person name="Schoepp B."/>
            <person name="Siguier P."/>
            <person name="Simeonova D.D."/>
            <person name="Rouy Z."/>
            <person name="Segurens B."/>
            <person name="Turlin E."/>
            <person name="Vallenet D."/>
            <person name="van Dorsselaer A."/>
            <person name="Weiss S."/>
            <person name="Weissenbach J."/>
            <person name="Lett M.-C."/>
            <person name="Danchin A."/>
            <person name="Bertin P.N."/>
        </authorList>
    </citation>
    <scope>NUCLEOTIDE SEQUENCE [LARGE SCALE GENOMIC DNA]</scope>
    <source>
        <strain>ULPAs1</strain>
    </source>
</reference>
<gene>
    <name evidence="1" type="primary">tig</name>
    <name type="ordered locus">HEAR1753</name>
</gene>
<protein>
    <recommendedName>
        <fullName evidence="1">Trigger factor</fullName>
        <shortName evidence="1">TF</shortName>
        <ecNumber evidence="1">5.2.1.8</ecNumber>
    </recommendedName>
    <alternativeName>
        <fullName evidence="1">PPIase</fullName>
    </alternativeName>
</protein>
<dbReference type="EC" id="5.2.1.8" evidence="1"/>
<dbReference type="EMBL" id="CU207211">
    <property type="protein sequence ID" value="CAL61909.1"/>
    <property type="molecule type" value="Genomic_DNA"/>
</dbReference>
<dbReference type="SMR" id="A4G5X2"/>
<dbReference type="STRING" id="204773.HEAR1753"/>
<dbReference type="KEGG" id="har:HEAR1753"/>
<dbReference type="eggNOG" id="COG0544">
    <property type="taxonomic scope" value="Bacteria"/>
</dbReference>
<dbReference type="HOGENOM" id="CLU_033058_2_0_4"/>
<dbReference type="OrthoDB" id="9767721at2"/>
<dbReference type="Proteomes" id="UP000006697">
    <property type="component" value="Chromosome"/>
</dbReference>
<dbReference type="GO" id="GO:0005737">
    <property type="term" value="C:cytoplasm"/>
    <property type="evidence" value="ECO:0007669"/>
    <property type="project" value="UniProtKB-SubCell"/>
</dbReference>
<dbReference type="GO" id="GO:0003755">
    <property type="term" value="F:peptidyl-prolyl cis-trans isomerase activity"/>
    <property type="evidence" value="ECO:0007669"/>
    <property type="project" value="UniProtKB-UniRule"/>
</dbReference>
<dbReference type="GO" id="GO:0044183">
    <property type="term" value="F:protein folding chaperone"/>
    <property type="evidence" value="ECO:0007669"/>
    <property type="project" value="TreeGrafter"/>
</dbReference>
<dbReference type="GO" id="GO:0043022">
    <property type="term" value="F:ribosome binding"/>
    <property type="evidence" value="ECO:0007669"/>
    <property type="project" value="TreeGrafter"/>
</dbReference>
<dbReference type="GO" id="GO:0051083">
    <property type="term" value="P:'de novo' cotranslational protein folding"/>
    <property type="evidence" value="ECO:0007669"/>
    <property type="project" value="TreeGrafter"/>
</dbReference>
<dbReference type="GO" id="GO:0051301">
    <property type="term" value="P:cell division"/>
    <property type="evidence" value="ECO:0007669"/>
    <property type="project" value="UniProtKB-KW"/>
</dbReference>
<dbReference type="GO" id="GO:0061077">
    <property type="term" value="P:chaperone-mediated protein folding"/>
    <property type="evidence" value="ECO:0007669"/>
    <property type="project" value="TreeGrafter"/>
</dbReference>
<dbReference type="GO" id="GO:0015031">
    <property type="term" value="P:protein transport"/>
    <property type="evidence" value="ECO:0007669"/>
    <property type="project" value="UniProtKB-UniRule"/>
</dbReference>
<dbReference type="GO" id="GO:0043335">
    <property type="term" value="P:protein unfolding"/>
    <property type="evidence" value="ECO:0007669"/>
    <property type="project" value="TreeGrafter"/>
</dbReference>
<dbReference type="FunFam" id="3.10.50.40:FF:000001">
    <property type="entry name" value="Trigger factor"/>
    <property type="match status" value="1"/>
</dbReference>
<dbReference type="Gene3D" id="3.10.50.40">
    <property type="match status" value="1"/>
</dbReference>
<dbReference type="Gene3D" id="3.30.70.1050">
    <property type="entry name" value="Trigger factor ribosome-binding domain"/>
    <property type="match status" value="1"/>
</dbReference>
<dbReference type="Gene3D" id="1.10.3120.10">
    <property type="entry name" value="Trigger factor, C-terminal domain"/>
    <property type="match status" value="1"/>
</dbReference>
<dbReference type="HAMAP" id="MF_00303">
    <property type="entry name" value="Trigger_factor_Tig"/>
    <property type="match status" value="1"/>
</dbReference>
<dbReference type="InterPro" id="IPR046357">
    <property type="entry name" value="PPIase_dom_sf"/>
</dbReference>
<dbReference type="InterPro" id="IPR001179">
    <property type="entry name" value="PPIase_FKBP_dom"/>
</dbReference>
<dbReference type="InterPro" id="IPR005215">
    <property type="entry name" value="Trig_fac"/>
</dbReference>
<dbReference type="InterPro" id="IPR008880">
    <property type="entry name" value="Trigger_fac_C"/>
</dbReference>
<dbReference type="InterPro" id="IPR037041">
    <property type="entry name" value="Trigger_fac_C_sf"/>
</dbReference>
<dbReference type="InterPro" id="IPR008881">
    <property type="entry name" value="Trigger_fac_ribosome-bd_bac"/>
</dbReference>
<dbReference type="InterPro" id="IPR036611">
    <property type="entry name" value="Trigger_fac_ribosome-bd_sf"/>
</dbReference>
<dbReference type="InterPro" id="IPR027304">
    <property type="entry name" value="Trigger_fact/SurA_dom_sf"/>
</dbReference>
<dbReference type="NCBIfam" id="TIGR00115">
    <property type="entry name" value="tig"/>
    <property type="match status" value="1"/>
</dbReference>
<dbReference type="PANTHER" id="PTHR30560">
    <property type="entry name" value="TRIGGER FACTOR CHAPERONE AND PEPTIDYL-PROLYL CIS/TRANS ISOMERASE"/>
    <property type="match status" value="1"/>
</dbReference>
<dbReference type="PANTHER" id="PTHR30560:SF3">
    <property type="entry name" value="TRIGGER FACTOR-LIKE PROTEIN TIG, CHLOROPLASTIC"/>
    <property type="match status" value="1"/>
</dbReference>
<dbReference type="Pfam" id="PF00254">
    <property type="entry name" value="FKBP_C"/>
    <property type="match status" value="1"/>
</dbReference>
<dbReference type="Pfam" id="PF05698">
    <property type="entry name" value="Trigger_C"/>
    <property type="match status" value="1"/>
</dbReference>
<dbReference type="Pfam" id="PF05697">
    <property type="entry name" value="Trigger_N"/>
    <property type="match status" value="1"/>
</dbReference>
<dbReference type="PIRSF" id="PIRSF003095">
    <property type="entry name" value="Trigger_factor"/>
    <property type="match status" value="1"/>
</dbReference>
<dbReference type="SUPFAM" id="SSF54534">
    <property type="entry name" value="FKBP-like"/>
    <property type="match status" value="1"/>
</dbReference>
<dbReference type="SUPFAM" id="SSF109998">
    <property type="entry name" value="Triger factor/SurA peptide-binding domain-like"/>
    <property type="match status" value="1"/>
</dbReference>
<dbReference type="SUPFAM" id="SSF102735">
    <property type="entry name" value="Trigger factor ribosome-binding domain"/>
    <property type="match status" value="1"/>
</dbReference>
<dbReference type="PROSITE" id="PS50059">
    <property type="entry name" value="FKBP_PPIASE"/>
    <property type="match status" value="1"/>
</dbReference>
<evidence type="ECO:0000255" key="1">
    <source>
        <dbReference type="HAMAP-Rule" id="MF_00303"/>
    </source>
</evidence>
<organism>
    <name type="scientific">Herminiimonas arsenicoxydans</name>
    <dbReference type="NCBI Taxonomy" id="204773"/>
    <lineage>
        <taxon>Bacteria</taxon>
        <taxon>Pseudomonadati</taxon>
        <taxon>Pseudomonadota</taxon>
        <taxon>Betaproteobacteria</taxon>
        <taxon>Burkholderiales</taxon>
        <taxon>Oxalobacteraceae</taxon>
        <taxon>Herminiimonas</taxon>
    </lineage>
</organism>
<proteinExistence type="inferred from homology"/>
<keyword id="KW-0131">Cell cycle</keyword>
<keyword id="KW-0132">Cell division</keyword>
<keyword id="KW-0143">Chaperone</keyword>
<keyword id="KW-0963">Cytoplasm</keyword>
<keyword id="KW-0413">Isomerase</keyword>
<keyword id="KW-1185">Reference proteome</keyword>
<keyword id="KW-0697">Rotamase</keyword>
<feature type="chain" id="PRO_1000022690" description="Trigger factor">
    <location>
        <begin position="1"/>
        <end position="448"/>
    </location>
</feature>
<feature type="domain" description="PPIase FKBP-type" evidence="1">
    <location>
        <begin position="173"/>
        <end position="258"/>
    </location>
</feature>
<accession>A4G5X2</accession>
<sequence>MATAVETLDKLERRITITVPVAEVQTEVEKRLKVRARTVKAPGFRAGKVPMKMVAQQYGYQIENEVLNDKVGQAFGEATSENKLRVAGYPKIEAKNDDVAEGTLAFNATFEIYPEIKVGDLASAEVEKTIVEVSDAEIDKTIDILRKQRVHYHVKGEQSAHGDGGSDLTAKNSDRVTIDFVGTINGVEFQGGKAEGYAFVLGEGRMLAEFEAGTIGLKVGESKTFPLSFPADYHGADVAGKTAEFTITLKQIEWAHMPEVDAEFAKSLGIEDGDLEKMRADVKQNLEREVSNRVKARTKDSVMDALIKISEFDVPKVLIDQETQRLMESTRQDMAQRGMKVSDLPFPPELFTEQAERRVRLGLILAEVVKANELQAKPEQVKAQVEEFAQSYEDPTQVLKYYFSDRSRLAEVEALVLEENVVNYVLGKAKVADKSVAFDELMGNNAQG</sequence>
<comment type="function">
    <text evidence="1">Involved in protein export. Acts as a chaperone by maintaining the newly synthesized protein in an open conformation. Functions as a peptidyl-prolyl cis-trans isomerase.</text>
</comment>
<comment type="catalytic activity">
    <reaction evidence="1">
        <text>[protein]-peptidylproline (omega=180) = [protein]-peptidylproline (omega=0)</text>
        <dbReference type="Rhea" id="RHEA:16237"/>
        <dbReference type="Rhea" id="RHEA-COMP:10747"/>
        <dbReference type="Rhea" id="RHEA-COMP:10748"/>
        <dbReference type="ChEBI" id="CHEBI:83833"/>
        <dbReference type="ChEBI" id="CHEBI:83834"/>
        <dbReference type="EC" id="5.2.1.8"/>
    </reaction>
</comment>
<comment type="subcellular location">
    <subcellularLocation>
        <location>Cytoplasm</location>
    </subcellularLocation>
    <text evidence="1">About half TF is bound to the ribosome near the polypeptide exit tunnel while the other half is free in the cytoplasm.</text>
</comment>
<comment type="domain">
    <text evidence="1">Consists of 3 domains; the N-terminus binds the ribosome, the middle domain has PPIase activity, while the C-terminus has intrinsic chaperone activity on its own.</text>
</comment>
<comment type="similarity">
    <text evidence="1">Belongs to the FKBP-type PPIase family. Tig subfamily.</text>
</comment>
<name>TIG_HERAR</name>